<gene>
    <name type="primary">MRPL37</name>
</gene>
<name>RM37_BOVIN</name>
<evidence type="ECO:0000250" key="1">
    <source>
        <dbReference type="UniProtKB" id="Q9BZE1"/>
    </source>
</evidence>
<evidence type="ECO:0000269" key="2">
    <source>
    </source>
</evidence>
<evidence type="ECO:0000305" key="3"/>
<comment type="subunit">
    <text evidence="1">Component of the mitochondrial ribosome large subunit (39S) which comprises a 16S rRNA and about 50 distinct proteins.</text>
</comment>
<comment type="subcellular location">
    <subcellularLocation>
        <location evidence="2">Mitochondrion</location>
    </subcellularLocation>
</comment>
<comment type="similarity">
    <text evidence="3">Belongs to the mitochondrion-specific ribosomal protein mL37 family.</text>
</comment>
<organism>
    <name type="scientific">Bos taurus</name>
    <name type="common">Bovine</name>
    <dbReference type="NCBI Taxonomy" id="9913"/>
    <lineage>
        <taxon>Eukaryota</taxon>
        <taxon>Metazoa</taxon>
        <taxon>Chordata</taxon>
        <taxon>Craniata</taxon>
        <taxon>Vertebrata</taxon>
        <taxon>Euteleostomi</taxon>
        <taxon>Mammalia</taxon>
        <taxon>Eutheria</taxon>
        <taxon>Laurasiatheria</taxon>
        <taxon>Artiodactyla</taxon>
        <taxon>Ruminantia</taxon>
        <taxon>Pecora</taxon>
        <taxon>Bovidae</taxon>
        <taxon>Bovinae</taxon>
        <taxon>Bos</taxon>
    </lineage>
</organism>
<reference key="1">
    <citation type="submission" date="2006-04" db="EMBL/GenBank/DDBJ databases">
        <authorList>
            <consortium name="NIH - Mammalian Gene Collection (MGC) project"/>
        </authorList>
    </citation>
    <scope>NUCLEOTIDE SEQUENCE [LARGE SCALE MRNA]</scope>
    <source>
        <strain>Hereford</strain>
        <tissue>Uterus</tissue>
    </source>
</reference>
<reference key="2">
    <citation type="journal article" date="1999" name="Biochemistry">
        <title>Identification of mammalian mitochondrial ribosomal proteins (MRPs) by N-terminal sequencing of purified bovine MRPs and comparison to data bank sequences: the large subribosomal particle.</title>
        <authorList>
            <person name="Graack H.R."/>
            <person name="Bryant M.L."/>
            <person name="O'Brien T.W."/>
        </authorList>
    </citation>
    <scope>PROTEIN SEQUENCE OF 30-53</scope>
    <scope>SUBCELLULAR LOCATION</scope>
</reference>
<keyword id="KW-0903">Direct protein sequencing</keyword>
<keyword id="KW-0496">Mitochondrion</keyword>
<keyword id="KW-1185">Reference proteome</keyword>
<keyword id="KW-0687">Ribonucleoprotein</keyword>
<keyword id="KW-0689">Ribosomal protein</keyword>
<keyword id="KW-0809">Transit peptide</keyword>
<sequence length="423" mass="48053">MALASGPARRVLARPWGLGLEGCGVPRRGAYEWGVRSTRKPEPPPLDRVYEIPGLEPITFAGKMHFMPGLARPVFPPWDPGWTHPKFRRLPPLQEHPLYKDEVCYIFHQRCRLLEGVKQALWLTKTKLIEGLPEKVLSLADNPRNHIENQDERVLNVISHARLWHSTEDIPKRETYCPVIVDSLIQLCKSQILKHPSLARRICAQKNMLSTTWKRESTLIQVHGSSGAQLNAKDPLPPIASREEVEATKNHVLETFSPISPTISLQECHIYDVNDDTGFREGYPYPCPHTLYLLESANLRAHRFQPDQLRAKMILFAFGNALAQARLLYGNDPKVLEQPVVVQSVGTDGRVFQFLVLQLNTTDLASEEGIKNLVWVDSDQLLYQHFWCLPVIKKKVVVEPVGPTGFQPETFRKFLALYLHGAV</sequence>
<protein>
    <recommendedName>
        <fullName evidence="3">Large ribosomal subunit protein mL37</fullName>
    </recommendedName>
    <alternativeName>
        <fullName>39S ribosomal protein L37, mitochondrial</fullName>
        <shortName>L37mt</shortName>
        <shortName>MRP-L37</shortName>
    </alternativeName>
</protein>
<proteinExistence type="evidence at protein level"/>
<feature type="transit peptide" description="Mitochondrion" evidence="2">
    <location>
        <begin position="1"/>
        <end position="29"/>
    </location>
</feature>
<feature type="chain" id="PRO_0000391493" description="Large ribosomal subunit protein mL37">
    <location>
        <begin position="30"/>
        <end position="423"/>
    </location>
</feature>
<dbReference type="EMBL" id="BC114689">
    <property type="protein sequence ID" value="AAI14690.1"/>
    <property type="molecule type" value="mRNA"/>
</dbReference>
<dbReference type="RefSeq" id="NP_001076869.1">
    <property type="nucleotide sequence ID" value="NM_001083400.1"/>
</dbReference>
<dbReference type="SMR" id="A4FUC0"/>
<dbReference type="FunCoup" id="A4FUC0">
    <property type="interactions" value="1858"/>
</dbReference>
<dbReference type="STRING" id="9913.ENSBTAP00000014187"/>
<dbReference type="iPTMnet" id="A4FUC0"/>
<dbReference type="PaxDb" id="9913-ENSBTAP00000014187"/>
<dbReference type="Ensembl" id="ENSBTAT00000014187.6">
    <property type="protein sequence ID" value="ENSBTAP00000014187.4"/>
    <property type="gene ID" value="ENSBTAG00000010715.6"/>
</dbReference>
<dbReference type="GeneID" id="510127"/>
<dbReference type="KEGG" id="bta:510127"/>
<dbReference type="CTD" id="51253"/>
<dbReference type="VEuPathDB" id="HostDB:ENSBTAG00000010715"/>
<dbReference type="VGNC" id="VGNC:59185">
    <property type="gene designation" value="MRPL37"/>
</dbReference>
<dbReference type="eggNOG" id="ENOG502QQAQ">
    <property type="taxonomic scope" value="Eukaryota"/>
</dbReference>
<dbReference type="GeneTree" id="ENSGT00390000000867"/>
<dbReference type="HOGENOM" id="CLU_037022_1_0_1"/>
<dbReference type="InParanoid" id="A4FUC0"/>
<dbReference type="OMA" id="WERGWHD"/>
<dbReference type="OrthoDB" id="5835618at2759"/>
<dbReference type="TreeFam" id="TF323297"/>
<dbReference type="Reactome" id="R-BTA-5389840">
    <property type="pathway name" value="Mitochondrial translation elongation"/>
</dbReference>
<dbReference type="Reactome" id="R-BTA-5419276">
    <property type="pathway name" value="Mitochondrial translation termination"/>
</dbReference>
<dbReference type="Proteomes" id="UP000009136">
    <property type="component" value="Chromosome 3"/>
</dbReference>
<dbReference type="Bgee" id="ENSBTAG00000010715">
    <property type="expression patterns" value="Expressed in oocyte and 106 other cell types or tissues"/>
</dbReference>
<dbReference type="GO" id="GO:0005743">
    <property type="term" value="C:mitochondrial inner membrane"/>
    <property type="evidence" value="ECO:0000304"/>
    <property type="project" value="Reactome"/>
</dbReference>
<dbReference type="GO" id="GO:0005762">
    <property type="term" value="C:mitochondrial large ribosomal subunit"/>
    <property type="evidence" value="ECO:0000250"/>
    <property type="project" value="UniProtKB"/>
</dbReference>
<dbReference type="GO" id="GO:0005739">
    <property type="term" value="C:mitochondrion"/>
    <property type="evidence" value="ECO:0000318"/>
    <property type="project" value="GO_Central"/>
</dbReference>
<dbReference type="GO" id="GO:0003735">
    <property type="term" value="F:structural constituent of ribosome"/>
    <property type="evidence" value="ECO:0007669"/>
    <property type="project" value="InterPro"/>
</dbReference>
<dbReference type="GO" id="GO:0006412">
    <property type="term" value="P:translation"/>
    <property type="evidence" value="ECO:0007669"/>
    <property type="project" value="InterPro"/>
</dbReference>
<dbReference type="InterPro" id="IPR052482">
    <property type="entry name" value="mtLSU_mL37"/>
</dbReference>
<dbReference type="InterPro" id="IPR010793">
    <property type="entry name" value="Ribosomal_mL37/mL65"/>
</dbReference>
<dbReference type="PANTHER" id="PTHR15889:SF2">
    <property type="entry name" value="LARGE RIBOSOMAL SUBUNIT PROTEIN ML37"/>
    <property type="match status" value="1"/>
</dbReference>
<dbReference type="PANTHER" id="PTHR15889">
    <property type="entry name" value="MITOCHONDRIAL RIBOSOMAL PROTEIN L37"/>
    <property type="match status" value="1"/>
</dbReference>
<dbReference type="Pfam" id="PF07147">
    <property type="entry name" value="PDCD9"/>
    <property type="match status" value="1"/>
</dbReference>
<accession>A4FUC0</accession>